<organism>
    <name type="scientific">Methanococcoides burtonii (strain DSM 6242 / NBRC 107633 / OCM 468 / ACE-M)</name>
    <dbReference type="NCBI Taxonomy" id="259564"/>
    <lineage>
        <taxon>Archaea</taxon>
        <taxon>Methanobacteriati</taxon>
        <taxon>Methanobacteriota</taxon>
        <taxon>Stenosarchaea group</taxon>
        <taxon>Methanomicrobia</taxon>
        <taxon>Methanosarcinales</taxon>
        <taxon>Methanosarcinaceae</taxon>
        <taxon>Methanococcoides</taxon>
    </lineage>
</organism>
<gene>
    <name evidence="1" type="primary">tyrS</name>
    <name type="ordered locus">Mbur_1463</name>
</gene>
<dbReference type="EC" id="6.1.1.1" evidence="1"/>
<dbReference type="EMBL" id="CP000300">
    <property type="protein sequence ID" value="ABE52370.1"/>
    <property type="molecule type" value="Genomic_DNA"/>
</dbReference>
<dbReference type="RefSeq" id="WP_011499514.1">
    <property type="nucleotide sequence ID" value="NC_007955.1"/>
</dbReference>
<dbReference type="SMR" id="Q12W06"/>
<dbReference type="STRING" id="259564.Mbur_1463"/>
<dbReference type="GeneID" id="3998492"/>
<dbReference type="KEGG" id="mbu:Mbur_1463"/>
<dbReference type="HOGENOM" id="CLU_035267_0_1_2"/>
<dbReference type="OrthoDB" id="8389at2157"/>
<dbReference type="Proteomes" id="UP000001979">
    <property type="component" value="Chromosome"/>
</dbReference>
<dbReference type="GO" id="GO:0005737">
    <property type="term" value="C:cytoplasm"/>
    <property type="evidence" value="ECO:0007669"/>
    <property type="project" value="UniProtKB-SubCell"/>
</dbReference>
<dbReference type="GO" id="GO:0005524">
    <property type="term" value="F:ATP binding"/>
    <property type="evidence" value="ECO:0007669"/>
    <property type="project" value="UniProtKB-UniRule"/>
</dbReference>
<dbReference type="GO" id="GO:0004831">
    <property type="term" value="F:tyrosine-tRNA ligase activity"/>
    <property type="evidence" value="ECO:0007669"/>
    <property type="project" value="UniProtKB-UniRule"/>
</dbReference>
<dbReference type="GO" id="GO:0006437">
    <property type="term" value="P:tyrosyl-tRNA aminoacylation"/>
    <property type="evidence" value="ECO:0007669"/>
    <property type="project" value="UniProtKB-UniRule"/>
</dbReference>
<dbReference type="Gene3D" id="3.40.50.620">
    <property type="entry name" value="HUPs"/>
    <property type="match status" value="1"/>
</dbReference>
<dbReference type="Gene3D" id="1.10.240.10">
    <property type="entry name" value="Tyrosyl-Transfer RNA Synthetase"/>
    <property type="match status" value="1"/>
</dbReference>
<dbReference type="HAMAP" id="MF_02008">
    <property type="entry name" value="Tyr_tRNA_synth_type3"/>
    <property type="match status" value="1"/>
</dbReference>
<dbReference type="InterPro" id="IPR001412">
    <property type="entry name" value="aa-tRNA-synth_I_CS"/>
</dbReference>
<dbReference type="InterPro" id="IPR002305">
    <property type="entry name" value="aa-tRNA-synth_Ic"/>
</dbReference>
<dbReference type="InterPro" id="IPR014729">
    <property type="entry name" value="Rossmann-like_a/b/a_fold"/>
</dbReference>
<dbReference type="InterPro" id="IPR002307">
    <property type="entry name" value="Tyr-tRNA-ligase"/>
</dbReference>
<dbReference type="InterPro" id="IPR023684">
    <property type="entry name" value="Tyr-tRNA-ligase_3"/>
</dbReference>
<dbReference type="InterPro" id="IPR023617">
    <property type="entry name" value="Tyr-tRNA-ligase_arc/euk-type"/>
</dbReference>
<dbReference type="InterPro" id="IPR050489">
    <property type="entry name" value="Tyr-tRNA_synthase"/>
</dbReference>
<dbReference type="NCBIfam" id="NF006330">
    <property type="entry name" value="PRK08560.1"/>
    <property type="match status" value="1"/>
</dbReference>
<dbReference type="NCBIfam" id="TIGR00234">
    <property type="entry name" value="tyrS"/>
    <property type="match status" value="1"/>
</dbReference>
<dbReference type="PANTHER" id="PTHR46264:SF4">
    <property type="entry name" value="TYROSINE--TRNA LIGASE, CYTOPLASMIC"/>
    <property type="match status" value="1"/>
</dbReference>
<dbReference type="PANTHER" id="PTHR46264">
    <property type="entry name" value="TYROSINE-TRNA LIGASE"/>
    <property type="match status" value="1"/>
</dbReference>
<dbReference type="Pfam" id="PF00579">
    <property type="entry name" value="tRNA-synt_1b"/>
    <property type="match status" value="1"/>
</dbReference>
<dbReference type="PIRSF" id="PIRSF006588">
    <property type="entry name" value="TyrRS_arch_euk"/>
    <property type="match status" value="1"/>
</dbReference>
<dbReference type="PRINTS" id="PR01040">
    <property type="entry name" value="TRNASYNTHTYR"/>
</dbReference>
<dbReference type="SUPFAM" id="SSF52374">
    <property type="entry name" value="Nucleotidylyl transferase"/>
    <property type="match status" value="1"/>
</dbReference>
<dbReference type="PROSITE" id="PS00178">
    <property type="entry name" value="AA_TRNA_LIGASE_I"/>
    <property type="match status" value="1"/>
</dbReference>
<protein>
    <recommendedName>
        <fullName evidence="1">Tyrosine--tRNA ligase</fullName>
        <ecNumber evidence="1">6.1.1.1</ecNumber>
    </recommendedName>
    <alternativeName>
        <fullName evidence="1">Tyrosyl-tRNA synthetase</fullName>
        <shortName evidence="1">TyrRS</shortName>
    </alternativeName>
</protein>
<comment type="function">
    <text evidence="1">Catalyzes the attachment of tyrosine to tRNA(Tyr) in a two-step reaction: tyrosine is first activated by ATP to form Tyr-AMP and then transferred to the acceptor end of tRNA(Tyr).</text>
</comment>
<comment type="catalytic activity">
    <reaction evidence="1">
        <text>tRNA(Tyr) + L-tyrosine + ATP = L-tyrosyl-tRNA(Tyr) + AMP + diphosphate + H(+)</text>
        <dbReference type="Rhea" id="RHEA:10220"/>
        <dbReference type="Rhea" id="RHEA-COMP:9706"/>
        <dbReference type="Rhea" id="RHEA-COMP:9707"/>
        <dbReference type="ChEBI" id="CHEBI:15378"/>
        <dbReference type="ChEBI" id="CHEBI:30616"/>
        <dbReference type="ChEBI" id="CHEBI:33019"/>
        <dbReference type="ChEBI" id="CHEBI:58315"/>
        <dbReference type="ChEBI" id="CHEBI:78442"/>
        <dbReference type="ChEBI" id="CHEBI:78536"/>
        <dbReference type="ChEBI" id="CHEBI:456215"/>
        <dbReference type="EC" id="6.1.1.1"/>
    </reaction>
</comment>
<comment type="subunit">
    <text evidence="1">Homodimer.</text>
</comment>
<comment type="subcellular location">
    <subcellularLocation>
        <location evidence="1">Cytoplasm</location>
    </subcellularLocation>
</comment>
<comment type="similarity">
    <text evidence="1">Belongs to the class-I aminoacyl-tRNA synthetase family. TyrS type 3 subfamily.</text>
</comment>
<feature type="chain" id="PRO_0000303676" description="Tyrosine--tRNA ligase">
    <location>
        <begin position="1"/>
        <end position="317"/>
    </location>
</feature>
<feature type="short sequence motif" description="'HIGH' region">
    <location>
        <begin position="38"/>
        <end position="46"/>
    </location>
</feature>
<feature type="short sequence motif" description="'KMSKS' region">
    <location>
        <begin position="211"/>
        <end position="215"/>
    </location>
</feature>
<feature type="binding site" evidence="1">
    <location>
        <position position="33"/>
    </location>
    <ligand>
        <name>L-tyrosine</name>
        <dbReference type="ChEBI" id="CHEBI:58315"/>
    </ligand>
</feature>
<feature type="binding site" evidence="1">
    <location>
        <position position="155"/>
    </location>
    <ligand>
        <name>L-tyrosine</name>
        <dbReference type="ChEBI" id="CHEBI:58315"/>
    </ligand>
</feature>
<feature type="binding site" evidence="1">
    <location>
        <position position="159"/>
    </location>
    <ligand>
        <name>L-tyrosine</name>
        <dbReference type="ChEBI" id="CHEBI:58315"/>
    </ligand>
</feature>
<feature type="binding site" evidence="1">
    <location>
        <position position="162"/>
    </location>
    <ligand>
        <name>L-tyrosine</name>
        <dbReference type="ChEBI" id="CHEBI:58315"/>
    </ligand>
</feature>
<feature type="binding site" evidence="1">
    <location>
        <position position="177"/>
    </location>
    <ligand>
        <name>L-tyrosine</name>
        <dbReference type="ChEBI" id="CHEBI:58315"/>
    </ligand>
</feature>
<feature type="binding site" evidence="1">
    <location>
        <position position="214"/>
    </location>
    <ligand>
        <name>ATP</name>
        <dbReference type="ChEBI" id="CHEBI:30616"/>
    </ligand>
</feature>
<keyword id="KW-0030">Aminoacyl-tRNA synthetase</keyword>
<keyword id="KW-0067">ATP-binding</keyword>
<keyword id="KW-0963">Cytoplasm</keyword>
<keyword id="KW-0436">Ligase</keyword>
<keyword id="KW-0547">Nucleotide-binding</keyword>
<keyword id="KW-0648">Protein biosynthesis</keyword>
<proteinExistence type="inferred from homology"/>
<sequence length="317" mass="35635">MENMDLIKRNVQEIVTEEELTKLLETKKHPSAYTGYEPSGKIHMGHVLTVNKLLDLQKAGFEITVLLADVHAYLNQKGTMDEVRKTADYNKKCFLALGLDPEMTNFVYGSDFQLSPEYMLNVLKLTQATSLNRAKRSMDEVGRKMEDPKVSQMVYPIMQAVDIALLGVDVAVGGIDQRKIHMLAREGLPGLGFKAPLCIHTPILLGLDGTKMSSSNENYISVDDDEAALKKKFKKAFCPAEDIENNPVLELFKYHITPRYDEMVFERPEKFGGDLVCKSYAELEKVFADGSLHPMDLKNGAAKYLNEILEPVRSVLE</sequence>
<evidence type="ECO:0000255" key="1">
    <source>
        <dbReference type="HAMAP-Rule" id="MF_02008"/>
    </source>
</evidence>
<name>SYY_METBU</name>
<reference key="1">
    <citation type="journal article" date="2009" name="ISME J.">
        <title>The genome sequence of the psychrophilic archaeon, Methanococcoides burtonii: the role of genome evolution in cold adaptation.</title>
        <authorList>
            <person name="Allen M.A."/>
            <person name="Lauro F.M."/>
            <person name="Williams T.J."/>
            <person name="Burg D."/>
            <person name="Siddiqui K.S."/>
            <person name="De Francisci D."/>
            <person name="Chong K.W."/>
            <person name="Pilak O."/>
            <person name="Chew H.H."/>
            <person name="De Maere M.Z."/>
            <person name="Ting L."/>
            <person name="Katrib M."/>
            <person name="Ng C."/>
            <person name="Sowers K.R."/>
            <person name="Galperin M.Y."/>
            <person name="Anderson I.J."/>
            <person name="Ivanova N."/>
            <person name="Dalin E."/>
            <person name="Martinez M."/>
            <person name="Lapidus A."/>
            <person name="Hauser L."/>
            <person name="Land M."/>
            <person name="Thomas T."/>
            <person name="Cavicchioli R."/>
        </authorList>
    </citation>
    <scope>NUCLEOTIDE SEQUENCE [LARGE SCALE GENOMIC DNA]</scope>
    <source>
        <strain>DSM 6242 / NBRC 107633 / OCM 468 / ACE-M</strain>
    </source>
</reference>
<accession>Q12W06</accession>